<sequence length="198" mass="21946">MATNVTVHNATCFSQALTEDFWDGVKLSFTVSIVIGLVIGGIIWTLVTCLSRRRASASISPRMPKSSSRRPRSSSHNHALNRSGFYRNSSCERRSNLSLASLTFQRQTSQEQTDPFTRKPSFRASTFHPFMQCPPLAVEADSQLVTLPRSNNTSPTANNTVNLSRPDFHWSNNSLRLGPSTQTPPPAYDSIIKAFPDS</sequence>
<accession>Q08D18</accession>
<organism>
    <name type="scientific">Xenopus tropicalis</name>
    <name type="common">Western clawed frog</name>
    <name type="synonym">Silurana tropicalis</name>
    <dbReference type="NCBI Taxonomy" id="8364"/>
    <lineage>
        <taxon>Eukaryota</taxon>
        <taxon>Metazoa</taxon>
        <taxon>Chordata</taxon>
        <taxon>Craniata</taxon>
        <taxon>Vertebrata</taxon>
        <taxon>Euteleostomi</taxon>
        <taxon>Amphibia</taxon>
        <taxon>Batrachia</taxon>
        <taxon>Anura</taxon>
        <taxon>Pipoidea</taxon>
        <taxon>Pipidae</taxon>
        <taxon>Xenopodinae</taxon>
        <taxon>Xenopus</taxon>
        <taxon>Silurana</taxon>
    </lineage>
</organism>
<reference key="1">
    <citation type="submission" date="2006-09" db="EMBL/GenBank/DDBJ databases">
        <authorList>
            <consortium name="NIH - Xenopus Gene Collection (XGC) project"/>
        </authorList>
    </citation>
    <scope>NUCLEOTIDE SEQUENCE [LARGE SCALE MRNA]</scope>
    <source>
        <strain>N6</strain>
        <tissue>Lung</tissue>
    </source>
</reference>
<proteinExistence type="evidence at transcript level"/>
<protein>
    <recommendedName>
        <fullName>Myc target protein 1 homolog</fullName>
    </recommendedName>
</protein>
<feature type="chain" id="PRO_0000310962" description="Myc target protein 1 homolog">
    <location>
        <begin position="1"/>
        <end position="198"/>
    </location>
</feature>
<feature type="region of interest" description="Disordered" evidence="3">
    <location>
        <begin position="58"/>
        <end position="83"/>
    </location>
</feature>
<feature type="region of interest" description="Disordered" evidence="3">
    <location>
        <begin position="172"/>
        <end position="198"/>
    </location>
</feature>
<feature type="short sequence motif" description="Bipartite nuclear localization signal" evidence="2">
    <location>
        <begin position="52"/>
        <end position="72"/>
    </location>
</feature>
<feature type="compositionally biased region" description="Polar residues" evidence="3">
    <location>
        <begin position="172"/>
        <end position="181"/>
    </location>
</feature>
<dbReference type="EMBL" id="BC123988">
    <property type="protein sequence ID" value="AAI23989.1"/>
    <property type="molecule type" value="mRNA"/>
</dbReference>
<dbReference type="RefSeq" id="NP_001072870.1">
    <property type="nucleotide sequence ID" value="NM_001079402.1"/>
</dbReference>
<dbReference type="SMR" id="Q08D18"/>
<dbReference type="FunCoup" id="Q08D18">
    <property type="interactions" value="560"/>
</dbReference>
<dbReference type="STRING" id="8364.ENSXETP00000042310"/>
<dbReference type="PaxDb" id="8364-ENSXETP00000060042"/>
<dbReference type="DNASU" id="780331"/>
<dbReference type="GeneID" id="780331"/>
<dbReference type="KEGG" id="xtr:780331"/>
<dbReference type="AGR" id="Xenbase:XB-GENE-953939"/>
<dbReference type="CTD" id="80177"/>
<dbReference type="Xenbase" id="XB-GENE-953939">
    <property type="gene designation" value="myct1"/>
</dbReference>
<dbReference type="eggNOG" id="ENOG502RXWU">
    <property type="taxonomic scope" value="Eukaryota"/>
</dbReference>
<dbReference type="HOGENOM" id="CLU_104680_0_0_1"/>
<dbReference type="InParanoid" id="Q08D18"/>
<dbReference type="OMA" id="SFWGNNG"/>
<dbReference type="OrthoDB" id="9943706at2759"/>
<dbReference type="PhylomeDB" id="Q08D18"/>
<dbReference type="TreeFam" id="TF333196"/>
<dbReference type="Proteomes" id="UP000008143">
    <property type="component" value="Chromosome 5"/>
</dbReference>
<dbReference type="Bgee" id="ENSXETG00000031735">
    <property type="expression patterns" value="Expressed in skeletal muscle tissue and 10 other cell types or tissues"/>
</dbReference>
<dbReference type="GO" id="GO:0005634">
    <property type="term" value="C:nucleus"/>
    <property type="evidence" value="ECO:0007669"/>
    <property type="project" value="UniProtKB-SubCell"/>
</dbReference>
<dbReference type="InterPro" id="IPR029180">
    <property type="entry name" value="Myc_target_1"/>
</dbReference>
<dbReference type="PANTHER" id="PTHR14869">
    <property type="entry name" value="MYC TARGET PROTEIN 1"/>
    <property type="match status" value="1"/>
</dbReference>
<dbReference type="PANTHER" id="PTHR14869:SF0">
    <property type="entry name" value="MYC TARGET PROTEIN 1"/>
    <property type="match status" value="1"/>
</dbReference>
<dbReference type="Pfam" id="PF15179">
    <property type="entry name" value="Myc_target_1"/>
    <property type="match status" value="1"/>
</dbReference>
<comment type="function">
    <text evidence="1">May regulate certain MYC target genes, MYC seems to be a direct upstream transcriptional activator.</text>
</comment>
<comment type="subcellular location">
    <subcellularLocation>
        <location evidence="1">Nucleus</location>
    </subcellularLocation>
</comment>
<comment type="similarity">
    <text evidence="4">Belongs to the MYCT1 family.</text>
</comment>
<evidence type="ECO:0000250" key="1"/>
<evidence type="ECO:0000255" key="2"/>
<evidence type="ECO:0000256" key="3">
    <source>
        <dbReference type="SAM" id="MobiDB-lite"/>
    </source>
</evidence>
<evidence type="ECO:0000305" key="4"/>
<gene>
    <name type="primary">myct1</name>
</gene>
<name>MYCT1_XENTR</name>
<keyword id="KW-0539">Nucleus</keyword>
<keyword id="KW-1185">Reference proteome</keyword>